<proteinExistence type="evidence at protein level"/>
<accession>O67610</accession>
<reference key="1">
    <citation type="journal article" date="1998" name="Nature">
        <title>The complete genome of the hyperthermophilic bacterium Aquifex aeolicus.</title>
        <authorList>
            <person name="Deckert G."/>
            <person name="Warren P.V."/>
            <person name="Gaasterland T."/>
            <person name="Young W.G."/>
            <person name="Lenox A.L."/>
            <person name="Graham D.E."/>
            <person name="Overbeek R."/>
            <person name="Snead M.A."/>
            <person name="Keller M."/>
            <person name="Aujay M."/>
            <person name="Huber R."/>
            <person name="Feldman R.A."/>
            <person name="Short J.M."/>
            <person name="Olsen G.J."/>
            <person name="Swanson R.V."/>
        </authorList>
    </citation>
    <scope>NUCLEOTIDE SEQUENCE [LARGE SCALE GENOMIC DNA]</scope>
    <source>
        <strain>VF5</strain>
    </source>
</reference>
<reference key="2">
    <citation type="submission" date="2007-04" db="PDB data bank">
        <title>Crystal structure of aq_1716 from Aquifex aeolicus VF5.</title>
        <authorList>
            <consortium name="Southeast collaboratory for structural genomics (SECSG)"/>
        </authorList>
    </citation>
    <scope>X-RAY CRYSTALLOGRAPHY (1.84 ANGSTROMS)</scope>
    <scope>SUBUNIT</scope>
</reference>
<evidence type="ECO:0000250" key="1"/>
<evidence type="ECO:0000255" key="2">
    <source>
        <dbReference type="PROSITE-ProRule" id="PRU10001"/>
    </source>
</evidence>
<evidence type="ECO:0000269" key="3">
    <source ref="2"/>
</evidence>
<evidence type="ECO:0000305" key="4"/>
<evidence type="ECO:0007829" key="5">
    <source>
        <dbReference type="PDB" id="2PNF"/>
    </source>
</evidence>
<name>FABG_AQUAE</name>
<dbReference type="EC" id="1.1.1.100"/>
<dbReference type="EMBL" id="AE000657">
    <property type="protein sequence ID" value="AAC07575.1"/>
    <property type="molecule type" value="Genomic_DNA"/>
</dbReference>
<dbReference type="PIR" id="H70447">
    <property type="entry name" value="H70447"/>
</dbReference>
<dbReference type="RefSeq" id="NP_214176.1">
    <property type="nucleotide sequence ID" value="NC_000918.1"/>
</dbReference>
<dbReference type="RefSeq" id="WP_010881113.1">
    <property type="nucleotide sequence ID" value="NC_000918.1"/>
</dbReference>
<dbReference type="PDB" id="2P68">
    <property type="method" value="X-ray"/>
    <property type="resolution" value="1.84 A"/>
    <property type="chains" value="A/B=1-248"/>
</dbReference>
<dbReference type="PDB" id="2PNF">
    <property type="method" value="X-ray"/>
    <property type="resolution" value="1.80 A"/>
    <property type="chains" value="A/B=1-248"/>
</dbReference>
<dbReference type="PDBsum" id="2P68"/>
<dbReference type="PDBsum" id="2PNF"/>
<dbReference type="SMR" id="O67610"/>
<dbReference type="FunCoup" id="O67610">
    <property type="interactions" value="479"/>
</dbReference>
<dbReference type="STRING" id="224324.aq_1716"/>
<dbReference type="EnsemblBacteria" id="AAC07575">
    <property type="protein sequence ID" value="AAC07575"/>
    <property type="gene ID" value="aq_1716"/>
</dbReference>
<dbReference type="KEGG" id="aae:aq_1716"/>
<dbReference type="PATRIC" id="fig|224324.8.peg.1317"/>
<dbReference type="eggNOG" id="COG1028">
    <property type="taxonomic scope" value="Bacteria"/>
</dbReference>
<dbReference type="HOGENOM" id="CLU_010194_1_3_0"/>
<dbReference type="InParanoid" id="O67610"/>
<dbReference type="OrthoDB" id="9803333at2"/>
<dbReference type="UniPathway" id="UPA00094"/>
<dbReference type="EvolutionaryTrace" id="O67610"/>
<dbReference type="Proteomes" id="UP000000798">
    <property type="component" value="Chromosome"/>
</dbReference>
<dbReference type="GO" id="GO:0004316">
    <property type="term" value="F:3-oxoacyl-[acyl-carrier-protein] reductase (NADPH) activity"/>
    <property type="evidence" value="ECO:0000250"/>
    <property type="project" value="UniProtKB"/>
</dbReference>
<dbReference type="GO" id="GO:0051287">
    <property type="term" value="F:NAD binding"/>
    <property type="evidence" value="ECO:0007669"/>
    <property type="project" value="InterPro"/>
</dbReference>
<dbReference type="GO" id="GO:0050661">
    <property type="term" value="F:NADP binding"/>
    <property type="evidence" value="ECO:0000250"/>
    <property type="project" value="UniProtKB"/>
</dbReference>
<dbReference type="GO" id="GO:0016616">
    <property type="term" value="F:oxidoreductase activity, acting on the CH-OH group of donors, NAD or NADP as acceptor"/>
    <property type="evidence" value="ECO:0000318"/>
    <property type="project" value="GO_Central"/>
</dbReference>
<dbReference type="GO" id="GO:0030497">
    <property type="term" value="P:fatty acid elongation"/>
    <property type="evidence" value="ECO:0000250"/>
    <property type="project" value="UniProtKB"/>
</dbReference>
<dbReference type="CDD" id="cd05333">
    <property type="entry name" value="BKR_SDR_c"/>
    <property type="match status" value="1"/>
</dbReference>
<dbReference type="FunFam" id="3.40.50.720:FF:000115">
    <property type="entry name" value="3-oxoacyl-[acyl-carrier-protein] reductase FabG"/>
    <property type="match status" value="1"/>
</dbReference>
<dbReference type="Gene3D" id="3.40.50.720">
    <property type="entry name" value="NAD(P)-binding Rossmann-like Domain"/>
    <property type="match status" value="1"/>
</dbReference>
<dbReference type="InterPro" id="IPR011284">
    <property type="entry name" value="3oxo_ACP_reduc"/>
</dbReference>
<dbReference type="InterPro" id="IPR036291">
    <property type="entry name" value="NAD(P)-bd_dom_sf"/>
</dbReference>
<dbReference type="InterPro" id="IPR020904">
    <property type="entry name" value="Sc_DH/Rdtase_CS"/>
</dbReference>
<dbReference type="InterPro" id="IPR050259">
    <property type="entry name" value="SDR"/>
</dbReference>
<dbReference type="InterPro" id="IPR002347">
    <property type="entry name" value="SDR_fam"/>
</dbReference>
<dbReference type="NCBIfam" id="TIGR01830">
    <property type="entry name" value="3oxo_ACP_reduc"/>
    <property type="match status" value="1"/>
</dbReference>
<dbReference type="NCBIfam" id="NF004197">
    <property type="entry name" value="PRK05653.1-1"/>
    <property type="match status" value="1"/>
</dbReference>
<dbReference type="NCBIfam" id="NF004199">
    <property type="entry name" value="PRK05653.1-4"/>
    <property type="match status" value="1"/>
</dbReference>
<dbReference type="NCBIfam" id="NF005559">
    <property type="entry name" value="PRK07231.1"/>
    <property type="match status" value="1"/>
</dbReference>
<dbReference type="NCBIfam" id="NF009464">
    <property type="entry name" value="PRK12824.1"/>
    <property type="match status" value="1"/>
</dbReference>
<dbReference type="NCBIfam" id="NF009466">
    <property type="entry name" value="PRK12826.1-2"/>
    <property type="match status" value="1"/>
</dbReference>
<dbReference type="PANTHER" id="PTHR42879">
    <property type="entry name" value="3-OXOACYL-(ACYL-CARRIER-PROTEIN) REDUCTASE"/>
    <property type="match status" value="1"/>
</dbReference>
<dbReference type="PANTHER" id="PTHR42879:SF2">
    <property type="entry name" value="3-OXOACYL-[ACYL-CARRIER-PROTEIN] REDUCTASE FABG"/>
    <property type="match status" value="1"/>
</dbReference>
<dbReference type="Pfam" id="PF13561">
    <property type="entry name" value="adh_short_C2"/>
    <property type="match status" value="1"/>
</dbReference>
<dbReference type="PRINTS" id="PR00081">
    <property type="entry name" value="GDHRDH"/>
</dbReference>
<dbReference type="PRINTS" id="PR00080">
    <property type="entry name" value="SDRFAMILY"/>
</dbReference>
<dbReference type="SMART" id="SM00822">
    <property type="entry name" value="PKS_KR"/>
    <property type="match status" value="1"/>
</dbReference>
<dbReference type="SUPFAM" id="SSF51735">
    <property type="entry name" value="NAD(P)-binding Rossmann-fold domains"/>
    <property type="match status" value="1"/>
</dbReference>
<dbReference type="PROSITE" id="PS00061">
    <property type="entry name" value="ADH_SHORT"/>
    <property type="match status" value="1"/>
</dbReference>
<comment type="function">
    <text evidence="1">Catalyzes the NADPH-dependent reduction of beta-ketoacyl-ACP substrates to beta-hydroxyacyl-ACP products, the first reductive step in the elongation cycle of fatty acid biosynthesis.</text>
</comment>
<comment type="catalytic activity">
    <reaction>
        <text>a (3R)-hydroxyacyl-[ACP] + NADP(+) = a 3-oxoacyl-[ACP] + NADPH + H(+)</text>
        <dbReference type="Rhea" id="RHEA:17397"/>
        <dbReference type="Rhea" id="RHEA-COMP:9916"/>
        <dbReference type="Rhea" id="RHEA-COMP:9945"/>
        <dbReference type="ChEBI" id="CHEBI:15378"/>
        <dbReference type="ChEBI" id="CHEBI:57783"/>
        <dbReference type="ChEBI" id="CHEBI:58349"/>
        <dbReference type="ChEBI" id="CHEBI:78776"/>
        <dbReference type="ChEBI" id="CHEBI:78827"/>
        <dbReference type="EC" id="1.1.1.100"/>
    </reaction>
</comment>
<comment type="pathway">
    <text>Lipid metabolism; fatty acid biosynthesis.</text>
</comment>
<comment type="subunit">
    <text evidence="3">Homotetramer.</text>
</comment>
<comment type="similarity">
    <text evidence="4">Belongs to the short-chain dehydrogenases/reductases (SDR) family.</text>
</comment>
<gene>
    <name type="primary">fabG</name>
    <name type="ordered locus">aq_1716</name>
</gene>
<feature type="chain" id="PRO_0000054664" description="3-oxoacyl-[acyl-carrier-protein] reductase FabG">
    <location>
        <begin position="1"/>
        <end position="248"/>
    </location>
</feature>
<feature type="active site" description="Proton acceptor" evidence="2">
    <location>
        <position position="157"/>
    </location>
</feature>
<feature type="binding site" evidence="1">
    <location>
        <begin position="14"/>
        <end position="17"/>
    </location>
    <ligand>
        <name>NADP(+)</name>
        <dbReference type="ChEBI" id="CHEBI:58349"/>
    </ligand>
</feature>
<feature type="binding site" evidence="1">
    <location>
        <position position="39"/>
    </location>
    <ligand>
        <name>NADP(+)</name>
        <dbReference type="ChEBI" id="CHEBI:58349"/>
    </ligand>
</feature>
<feature type="binding site" evidence="1">
    <location>
        <begin position="65"/>
        <end position="66"/>
    </location>
    <ligand>
        <name>NADP(+)</name>
        <dbReference type="ChEBI" id="CHEBI:58349"/>
    </ligand>
</feature>
<feature type="binding site" evidence="1">
    <location>
        <position position="92"/>
    </location>
    <ligand>
        <name>NADP(+)</name>
        <dbReference type="ChEBI" id="CHEBI:58349"/>
    </ligand>
</feature>
<feature type="binding site" evidence="1">
    <location>
        <position position="144"/>
    </location>
    <ligand>
        <name>substrate</name>
    </ligand>
</feature>
<feature type="binding site" evidence="1">
    <location>
        <begin position="157"/>
        <end position="161"/>
    </location>
    <ligand>
        <name>NADP(+)</name>
        <dbReference type="ChEBI" id="CHEBI:58349"/>
    </ligand>
</feature>
<feature type="binding site" evidence="1">
    <location>
        <position position="190"/>
    </location>
    <ligand>
        <name>NADP(+)</name>
        <dbReference type="ChEBI" id="CHEBI:58349"/>
    </ligand>
</feature>
<feature type="strand" evidence="5">
    <location>
        <begin position="9"/>
        <end position="12"/>
    </location>
</feature>
<feature type="helix" evidence="5">
    <location>
        <begin position="18"/>
        <end position="29"/>
    </location>
</feature>
<feature type="strand" evidence="5">
    <location>
        <begin position="33"/>
        <end position="40"/>
    </location>
</feature>
<feature type="helix" evidence="5">
    <location>
        <begin position="41"/>
        <end position="55"/>
    </location>
</feature>
<feature type="strand" evidence="5">
    <location>
        <begin position="59"/>
        <end position="63"/>
    </location>
</feature>
<feature type="helix" evidence="5">
    <location>
        <begin position="69"/>
        <end position="82"/>
    </location>
</feature>
<feature type="strand" evidence="5">
    <location>
        <begin position="87"/>
        <end position="91"/>
    </location>
</feature>
<feature type="helix" evidence="5">
    <location>
        <begin position="101"/>
        <end position="103"/>
    </location>
</feature>
<feature type="helix" evidence="5">
    <location>
        <begin position="106"/>
        <end position="116"/>
    </location>
</feature>
<feature type="helix" evidence="5">
    <location>
        <begin position="118"/>
        <end position="127"/>
    </location>
</feature>
<feature type="helix" evidence="5">
    <location>
        <begin position="129"/>
        <end position="134"/>
    </location>
</feature>
<feature type="strand" evidence="5">
    <location>
        <begin position="137"/>
        <end position="142"/>
    </location>
</feature>
<feature type="helix" evidence="5">
    <location>
        <begin position="145"/>
        <end position="149"/>
    </location>
</feature>
<feature type="helix" evidence="5">
    <location>
        <begin position="155"/>
        <end position="175"/>
    </location>
</feature>
<feature type="helix" evidence="5">
    <location>
        <begin position="176"/>
        <end position="178"/>
    </location>
</feature>
<feature type="strand" evidence="5">
    <location>
        <begin position="180"/>
        <end position="187"/>
    </location>
</feature>
<feature type="helix" evidence="5">
    <location>
        <begin position="193"/>
        <end position="197"/>
    </location>
</feature>
<feature type="helix" evidence="5">
    <location>
        <begin position="200"/>
        <end position="208"/>
    </location>
</feature>
<feature type="helix" evidence="5">
    <location>
        <begin position="218"/>
        <end position="229"/>
    </location>
</feature>
<feature type="helix" evidence="5">
    <location>
        <begin position="231"/>
        <end position="233"/>
    </location>
</feature>
<feature type="strand" evidence="5">
    <location>
        <begin position="240"/>
        <end position="244"/>
    </location>
</feature>
<keyword id="KW-0002">3D-structure</keyword>
<keyword id="KW-0275">Fatty acid biosynthesis</keyword>
<keyword id="KW-0276">Fatty acid metabolism</keyword>
<keyword id="KW-0444">Lipid biosynthesis</keyword>
<keyword id="KW-0443">Lipid metabolism</keyword>
<keyword id="KW-0521">NADP</keyword>
<keyword id="KW-0560">Oxidoreductase</keyword>
<keyword id="KW-1185">Reference proteome</keyword>
<protein>
    <recommendedName>
        <fullName>3-oxoacyl-[acyl-carrier-protein] reductase FabG</fullName>
        <ecNumber>1.1.1.100</ecNumber>
    </recommendedName>
    <alternativeName>
        <fullName>3-ketoacyl-acyl carrier protein reductase</fullName>
    </alternativeName>
    <alternativeName>
        <fullName>Beta-Ketoacyl-acyl carrier protein reductase</fullName>
    </alternativeName>
    <alternativeName>
        <fullName>Beta-ketoacyl-ACP reductase</fullName>
    </alternativeName>
</protein>
<organism>
    <name type="scientific">Aquifex aeolicus (strain VF5)</name>
    <dbReference type="NCBI Taxonomy" id="224324"/>
    <lineage>
        <taxon>Bacteria</taxon>
        <taxon>Pseudomonadati</taxon>
        <taxon>Aquificota</taxon>
        <taxon>Aquificia</taxon>
        <taxon>Aquificales</taxon>
        <taxon>Aquificaceae</taxon>
        <taxon>Aquifex</taxon>
    </lineage>
</organism>
<sequence length="248" mass="26867">MEIKLQGKVSLVTGSTRGIGRAIAEKLASAGSTVIITGTSGERAKAVAEEIANKYGVKAHGVEMNLLSEESINKAFEEIYNLVDGIDILVNNAGITRDKLFLRMSLLDWEEVLKVNLTGTFLVTQNSLRKMIKQRWGRIVNISSVVGFTGNVGQVNYSTTKAGLIGFTKSLAKELAPRNVLVNAVAPGFIETDMTAVLSEEIKQKYKEQIPLGRFGSPEEVANVVLFLCSELASYITGEVIHVNGGMF</sequence>